<organism>
    <name type="scientific">Schizosaccharomyces pombe (strain 972 / ATCC 24843)</name>
    <name type="common">Fission yeast</name>
    <dbReference type="NCBI Taxonomy" id="284812"/>
    <lineage>
        <taxon>Eukaryota</taxon>
        <taxon>Fungi</taxon>
        <taxon>Dikarya</taxon>
        <taxon>Ascomycota</taxon>
        <taxon>Taphrinomycotina</taxon>
        <taxon>Schizosaccharomycetes</taxon>
        <taxon>Schizosaccharomycetales</taxon>
        <taxon>Schizosaccharomycetaceae</taxon>
        <taxon>Schizosaccharomyces</taxon>
    </lineage>
</organism>
<comment type="function">
    <text evidence="1">Catalyzes the activation of alpha-aminoadipate by ATP-dependent adenylation and the reduction of activated alpha-aminoadipate by NADPH. The activated alpha-aminoadipate is bound to the phosphopantheinyl group of the enzyme itself before it is reduced to (S)-2-amino-6-oxohexanoate.</text>
</comment>
<comment type="catalytic activity">
    <reaction evidence="1">
        <text>(S)-2-amino-6-oxohexanoate + NADP(+) + H2O = L-2-aminoadipate + NADPH + 2 H(+)</text>
        <dbReference type="Rhea" id="RHEA:12304"/>
        <dbReference type="ChEBI" id="CHEBI:15377"/>
        <dbReference type="ChEBI" id="CHEBI:15378"/>
        <dbReference type="ChEBI" id="CHEBI:57783"/>
        <dbReference type="ChEBI" id="CHEBI:58321"/>
        <dbReference type="ChEBI" id="CHEBI:58349"/>
        <dbReference type="ChEBI" id="CHEBI:58672"/>
        <dbReference type="EC" id="1.2.1.31"/>
    </reaction>
</comment>
<comment type="catalytic activity">
    <reaction evidence="1">
        <text>(S)-2-amino-6-oxohexanoate + NAD(+) + H2O = L-2-aminoadipate + NADH + 2 H(+)</text>
        <dbReference type="Rhea" id="RHEA:12308"/>
        <dbReference type="ChEBI" id="CHEBI:15377"/>
        <dbReference type="ChEBI" id="CHEBI:15378"/>
        <dbReference type="ChEBI" id="CHEBI:57540"/>
        <dbReference type="ChEBI" id="CHEBI:57945"/>
        <dbReference type="ChEBI" id="CHEBI:58321"/>
        <dbReference type="ChEBI" id="CHEBI:58672"/>
        <dbReference type="EC" id="1.2.1.31"/>
    </reaction>
</comment>
<comment type="catalytic activity">
    <reaction evidence="1">
        <text>(S)-2-amino-6-oxohexanoate + AMP + diphosphate + NADP(+) = L-2-aminoadipate + ATP + NADPH + H(+)</text>
        <dbReference type="Rhea" id="RHEA:46936"/>
        <dbReference type="ChEBI" id="CHEBI:15378"/>
        <dbReference type="ChEBI" id="CHEBI:30616"/>
        <dbReference type="ChEBI" id="CHEBI:33019"/>
        <dbReference type="ChEBI" id="CHEBI:57783"/>
        <dbReference type="ChEBI" id="CHEBI:58321"/>
        <dbReference type="ChEBI" id="CHEBI:58349"/>
        <dbReference type="ChEBI" id="CHEBI:58672"/>
        <dbReference type="ChEBI" id="CHEBI:456215"/>
        <dbReference type="EC" id="1.2.1.95"/>
    </reaction>
</comment>
<comment type="cofactor">
    <cofactor evidence="1">
        <name>pantetheine 4'-phosphate</name>
        <dbReference type="ChEBI" id="CHEBI:47942"/>
    </cofactor>
    <text evidence="1">Binds 1 phosphopantetheine covalently.</text>
</comment>
<comment type="pathway">
    <text>Amino-acid biosynthesis; L-lysine biosynthesis via AAA pathway; L-lysine from L-alpha-aminoadipate (fungal route): step 1/3.</text>
</comment>
<comment type="subcellular location">
    <subcellularLocation>
        <location evidence="4">Cytoplasm</location>
    </subcellularLocation>
</comment>
<comment type="similarity">
    <text evidence="5">Belongs to the ATP-dependent AMP-binding enzyme family.</text>
</comment>
<feature type="chain" id="PRO_0000193152" description="L-2-aminoadipate reductase">
    <location>
        <begin position="1"/>
        <end position="1419"/>
    </location>
</feature>
<feature type="domain" description="Carrier" evidence="2">
    <location>
        <begin position="880"/>
        <end position="956"/>
    </location>
</feature>
<feature type="modified residue" description="O-(pantetheine 4'-phosphoryl)serine" evidence="2">
    <location>
        <position position="916"/>
    </location>
</feature>
<feature type="mutagenesis site" description="No activity." evidence="3">
    <original>G</original>
    <variation>A</variation>
    <location>
        <position position="913"/>
    </location>
</feature>
<feature type="mutagenesis site" description="No activity." evidence="3">
    <original>S</original>
    <variation>A</variation>
    <variation>T</variation>
    <location>
        <position position="916"/>
    </location>
</feature>
<feature type="sequence conflict" description="In Ref. 1; AAC15909." evidence="5" ref="1">
    <original>MT</original>
    <variation>IA</variation>
    <location>
        <begin position="90"/>
        <end position="91"/>
    </location>
</feature>
<feature type="sequence conflict" description="In Ref. 1; AAC15909." evidence="5" ref="1">
    <location>
        <position position="196"/>
    </location>
</feature>
<feature type="sequence conflict" description="In Ref. 1; AAC15909." evidence="5" ref="1">
    <original>D</original>
    <variation>DG</variation>
    <location>
        <position position="487"/>
    </location>
</feature>
<feature type="sequence conflict" description="In Ref. 1; AAC15909." evidence="5" ref="1">
    <original>R</original>
    <variation>G</variation>
    <location>
        <position position="500"/>
    </location>
</feature>
<feature type="sequence conflict" description="In Ref. 1; AAC15909." evidence="5" ref="1">
    <location>
        <begin position="600"/>
        <end position="602"/>
    </location>
</feature>
<feature type="sequence conflict" description="In Ref. 1; AAC15909." evidence="5" ref="1">
    <original>AR</original>
    <variation>GP</variation>
    <location>
        <begin position="620"/>
        <end position="621"/>
    </location>
</feature>
<feature type="sequence conflict" description="In Ref. 1; AAC15909." evidence="5" ref="1">
    <original>Y</original>
    <variation>S</variation>
    <location>
        <position position="712"/>
    </location>
</feature>
<feature type="sequence conflict" description="In Ref. 1; AAC15909." evidence="5" ref="1">
    <original>LRK</original>
    <variation>PSQ</variation>
    <location>
        <begin position="926"/>
        <end position="928"/>
    </location>
</feature>
<feature type="sequence conflict" description="In Ref. 1; AAC15909." evidence="5" ref="1">
    <original>VVV</original>
    <variation>AAA</variation>
    <location>
        <begin position="1203"/>
        <end position="1205"/>
    </location>
</feature>
<feature type="sequence conflict" description="In Ref. 1; AAC15909." evidence="5" ref="1">
    <original>LVRM</original>
    <variation>WSK</variation>
    <location>
        <begin position="1225"/>
        <end position="1228"/>
    </location>
</feature>
<feature type="sequence conflict" description="In Ref. 1; AAC15909." evidence="5" ref="1">
    <original>P</original>
    <variation>A</variation>
    <location>
        <position position="1239"/>
    </location>
</feature>
<proteinExistence type="evidence at protein level"/>
<accession>P40976</accession>
<accession>Q9P770</accession>
<evidence type="ECO:0000250" key="1">
    <source>
        <dbReference type="UniProtKB" id="P07702"/>
    </source>
</evidence>
<evidence type="ECO:0000255" key="2">
    <source>
        <dbReference type="PROSITE-ProRule" id="PRU00258"/>
    </source>
</evidence>
<evidence type="ECO:0000269" key="3">
    <source>
    </source>
</evidence>
<evidence type="ECO:0000269" key="4">
    <source>
    </source>
</evidence>
<evidence type="ECO:0000305" key="5"/>
<sequence length="1419" mass="156894">MSQTAPSDTEYNQRLERWSERLKSQTISHLPTDYSRPVPSRLVEAVFERTLPEDAKTALIKVYVAAQAKGILVTPFNILLTIFIILVSRMTGDEDISIGTSSENAIPFVLRTFIQPSDSFLDLLAKVCDLEKEGSSDAVDFSDLINFLNAKLSKKDDPRKTLVHLRFYNAPDAPSENFLSTTGLDVDLTVLVSVKKPSDQLTSLRSQFTFPDLQLKLIYNQLLFSESRVNIVADQLLKLVVSASKDVTGPIGALDLMTPTQMNVLPDPTVDLDWSGYRGAIQDIFASNAAKFPDRECIVVTPSVTIDAPVTSYTYRQIDESSNILAHHLVKNGIERGDVVMVYAYRGVDLVVAVMGVLKAGATFSVIDPAYPPARQIIYLSVAKPRALVVLEDAGVLSPTVVEYVEKSLELKTYVPALKLAKDGSLTGGSVSKGADDILQHVLHLKSEQTGVVVGPDSTPTLSFTSGSEGIPKGVKGRHFSLAYYFDWMAQEFNLSESDRFTMLSGIAHDPIQRDIFTPLFLGASLIVPTAEDIGTPGQLAQWANKYKVTVTHLTPAMGQLLAAQADEPIPSLHHAFFVGDILTKRDCLRLQVLANNVNVVNMYGTTETQRSVSYFVVPARSQDQTFLESQKDVIPAGRGMKNVQLLVINRFDTNKICGIGEVGEIYLRAGGLAEGYLGNDELTSKKFLKSWFADPSKFVDRTPENAPWKPYWFGIRDRMYRSGDLGRYLPTGNVECSGRADDQIKIRGFRIELGEINTHLSRHPNVRENITLVRRDKDEEPTLVAYIVPQGLNKDDFDSATESEDIVVNGLKKYRKLIHDIREYLKTKLPSYAIPSVIVPLHKMPLNPNGKIDKPALPFPDTSQLAAASRSHSKHGVDETLTATERDIRDIWLRIIPHATDVNKKASFFDIGGHSILATRLIFELRKKFAVNVPLGLVFSEPTIEGLAKEIERMKSGEMISVMDIGKEETREPEIEYGKDALDLVDLIPKEFPTSKDLGIDEPKTVFLTGANGYLGVFILRDLMTRSSNLKVIALVRASSEEHGLKRLKDSCTAYGVWDESWAQKISVVNGDLALENWGIEERKWNKLTEVVDYVIHNGALVHWVYPYSKLRGPNVMGTITALKLCSLGKGKSLSFVSSTSTVDTEYYVNLSNEITSKGGNGIPESDPLQGSSKDLHTGYGQSKWVSEYLVRQAGLRGLRGVVVRPGYILGDSKSGAINTDDFLVRMVKGCIELGLYPNINNTVNMVPADHVARVVTASAFHPEQGVIVAHVTSHPRLRFNQFLGTLSTFGFNTKLSEYVNWRIALERFVINESHDSALYPLLHFVLDNLPANTKAPELDDTNTREILKRDASWTNVDVSNGAAILEHEMGLYLSYLVAIGFLPKPTLEGKKLPEVKINEATLEKLASAGGRGGAPTH</sequence>
<keyword id="KW-0028">Amino-acid biosynthesis</keyword>
<keyword id="KW-0963">Cytoplasm</keyword>
<keyword id="KW-0457">Lysine biosynthesis</keyword>
<keyword id="KW-0521">NADP</keyword>
<keyword id="KW-0560">Oxidoreductase</keyword>
<keyword id="KW-0596">Phosphopantetheine</keyword>
<keyword id="KW-0597">Phosphoprotein</keyword>
<keyword id="KW-1185">Reference proteome</keyword>
<protein>
    <recommendedName>
        <fullName>L-2-aminoadipate reductase</fullName>
        <ecNumber evidence="1">1.2.1.31</ecNumber>
        <ecNumber evidence="1">1.2.1.95</ecNumber>
    </recommendedName>
    <alternativeName>
        <fullName>Alpha-aminoadipate reductase</fullName>
        <shortName>Alpha-AR</shortName>
    </alternativeName>
    <alternativeName>
        <fullName>L-aminoadipate-semialdehyde dehydrogenase</fullName>
    </alternativeName>
</protein>
<reference key="1">
    <citation type="journal article" date="1995" name="Curr. Genet.">
        <title>Molecular properties of the lys1+ gene and the regulation of alpha-aminoadipate reductase in Schizosaccharomyces pombe.</title>
        <authorList>
            <person name="Ford R.A."/>
            <person name="Bhattacharjee J.K."/>
        </authorList>
    </citation>
    <scope>NUCLEOTIDE SEQUENCE [GENOMIC DNA]</scope>
    <source>
        <strain>972 / ATCC 24843</strain>
    </source>
</reference>
<reference key="2">
    <citation type="journal article" date="2002" name="Nature">
        <title>The genome sequence of Schizosaccharomyces pombe.</title>
        <authorList>
            <person name="Wood V."/>
            <person name="Gwilliam R."/>
            <person name="Rajandream M.A."/>
            <person name="Lyne M.H."/>
            <person name="Lyne R."/>
            <person name="Stewart A."/>
            <person name="Sgouros J.G."/>
            <person name="Peat N."/>
            <person name="Hayles J."/>
            <person name="Baker S.G."/>
            <person name="Basham D."/>
            <person name="Bowman S."/>
            <person name="Brooks K."/>
            <person name="Brown D."/>
            <person name="Brown S."/>
            <person name="Chillingworth T."/>
            <person name="Churcher C.M."/>
            <person name="Collins M."/>
            <person name="Connor R."/>
            <person name="Cronin A."/>
            <person name="Davis P."/>
            <person name="Feltwell T."/>
            <person name="Fraser A."/>
            <person name="Gentles S."/>
            <person name="Goble A."/>
            <person name="Hamlin N."/>
            <person name="Harris D.E."/>
            <person name="Hidalgo J."/>
            <person name="Hodgson G."/>
            <person name="Holroyd S."/>
            <person name="Hornsby T."/>
            <person name="Howarth S."/>
            <person name="Huckle E.J."/>
            <person name="Hunt S."/>
            <person name="Jagels K."/>
            <person name="James K.D."/>
            <person name="Jones L."/>
            <person name="Jones M."/>
            <person name="Leather S."/>
            <person name="McDonald S."/>
            <person name="McLean J."/>
            <person name="Mooney P."/>
            <person name="Moule S."/>
            <person name="Mungall K.L."/>
            <person name="Murphy L.D."/>
            <person name="Niblett D."/>
            <person name="Odell C."/>
            <person name="Oliver K."/>
            <person name="O'Neil S."/>
            <person name="Pearson D."/>
            <person name="Quail M.A."/>
            <person name="Rabbinowitsch E."/>
            <person name="Rutherford K.M."/>
            <person name="Rutter S."/>
            <person name="Saunders D."/>
            <person name="Seeger K."/>
            <person name="Sharp S."/>
            <person name="Skelton J."/>
            <person name="Simmonds M.N."/>
            <person name="Squares R."/>
            <person name="Squares S."/>
            <person name="Stevens K."/>
            <person name="Taylor K."/>
            <person name="Taylor R.G."/>
            <person name="Tivey A."/>
            <person name="Walsh S.V."/>
            <person name="Warren T."/>
            <person name="Whitehead S."/>
            <person name="Woodward J.R."/>
            <person name="Volckaert G."/>
            <person name="Aert R."/>
            <person name="Robben J."/>
            <person name="Grymonprez B."/>
            <person name="Weltjens I."/>
            <person name="Vanstreels E."/>
            <person name="Rieger M."/>
            <person name="Schaefer M."/>
            <person name="Mueller-Auer S."/>
            <person name="Gabel C."/>
            <person name="Fuchs M."/>
            <person name="Duesterhoeft A."/>
            <person name="Fritzc C."/>
            <person name="Holzer E."/>
            <person name="Moestl D."/>
            <person name="Hilbert H."/>
            <person name="Borzym K."/>
            <person name="Langer I."/>
            <person name="Beck A."/>
            <person name="Lehrach H."/>
            <person name="Reinhardt R."/>
            <person name="Pohl T.M."/>
            <person name="Eger P."/>
            <person name="Zimmermann W."/>
            <person name="Wedler H."/>
            <person name="Wambutt R."/>
            <person name="Purnelle B."/>
            <person name="Goffeau A."/>
            <person name="Cadieu E."/>
            <person name="Dreano S."/>
            <person name="Gloux S."/>
            <person name="Lelaure V."/>
            <person name="Mottier S."/>
            <person name="Galibert F."/>
            <person name="Aves S.J."/>
            <person name="Xiang Z."/>
            <person name="Hunt C."/>
            <person name="Moore K."/>
            <person name="Hurst S.M."/>
            <person name="Lucas M."/>
            <person name="Rochet M."/>
            <person name="Gaillardin C."/>
            <person name="Tallada V.A."/>
            <person name="Garzon A."/>
            <person name="Thode G."/>
            <person name="Daga R.R."/>
            <person name="Cruzado L."/>
            <person name="Jimenez J."/>
            <person name="Sanchez M."/>
            <person name="del Rey F."/>
            <person name="Benito J."/>
            <person name="Dominguez A."/>
            <person name="Revuelta J.L."/>
            <person name="Moreno S."/>
            <person name="Armstrong J."/>
            <person name="Forsburg S.L."/>
            <person name="Cerutti L."/>
            <person name="Lowe T."/>
            <person name="McCombie W.R."/>
            <person name="Paulsen I."/>
            <person name="Potashkin J."/>
            <person name="Shpakovski G.V."/>
            <person name="Ussery D."/>
            <person name="Barrell B.G."/>
            <person name="Nurse P."/>
        </authorList>
    </citation>
    <scope>NUCLEOTIDE SEQUENCE [LARGE SCALE GENOMIC DNA]</scope>
    <source>
        <strain>972 / ATCC 24843</strain>
    </source>
</reference>
<reference key="3">
    <citation type="journal article" date="2004" name="Yeast">
        <title>Posttranslational activation, site-directed mutation and phylogenetic analyses of the lysine biosynthesis enzymes alpha-aminoadipate reductase Lys1p (AAR) and the phosphopantetheinyl transferase Lys7p (PPTase) from Schizosaccharomyces pombe.</title>
        <authorList>
            <person name="Guo S."/>
            <person name="Bhattacharjee J.K."/>
        </authorList>
    </citation>
    <scope>MUTAGENESIS OF GLY-913 AND SER-916</scope>
    <source>
        <strain>972 / ATCC 24843</strain>
    </source>
</reference>
<reference key="4">
    <citation type="journal article" date="2006" name="Nat. Biotechnol.">
        <title>ORFeome cloning and global analysis of protein localization in the fission yeast Schizosaccharomyces pombe.</title>
        <authorList>
            <person name="Matsuyama A."/>
            <person name="Arai R."/>
            <person name="Yashiroda Y."/>
            <person name="Shirai A."/>
            <person name="Kamata A."/>
            <person name="Sekido S."/>
            <person name="Kobayashi Y."/>
            <person name="Hashimoto A."/>
            <person name="Hamamoto M."/>
            <person name="Hiraoka Y."/>
            <person name="Horinouchi S."/>
            <person name="Yoshida M."/>
        </authorList>
    </citation>
    <scope>SUBCELLULAR LOCATION [LARGE SCALE ANALYSIS]</scope>
</reference>
<dbReference type="EC" id="1.2.1.31" evidence="1"/>
<dbReference type="EC" id="1.2.1.95" evidence="1"/>
<dbReference type="EMBL" id="U15923">
    <property type="protein sequence ID" value="AAC15909.1"/>
    <property type="molecule type" value="Genomic_DNA"/>
</dbReference>
<dbReference type="EMBL" id="CU329670">
    <property type="protein sequence ID" value="CAB88271.1"/>
    <property type="molecule type" value="Genomic_DNA"/>
</dbReference>
<dbReference type="PIR" id="S57264">
    <property type="entry name" value="S57264"/>
</dbReference>
<dbReference type="RefSeq" id="NP_594314.1">
    <property type="nucleotide sequence ID" value="NM_001019737.2"/>
</dbReference>
<dbReference type="SMR" id="P40976"/>
<dbReference type="BioGRID" id="278556">
    <property type="interactions" value="5"/>
</dbReference>
<dbReference type="FunCoup" id="P40976">
    <property type="interactions" value="103"/>
</dbReference>
<dbReference type="STRING" id="284812.P40976"/>
<dbReference type="iPTMnet" id="P40976"/>
<dbReference type="PaxDb" id="4896-SPAP7G5.04c.1"/>
<dbReference type="EnsemblFungi" id="SPAP7G5.04c.1">
    <property type="protein sequence ID" value="SPAP7G5.04c.1:pep"/>
    <property type="gene ID" value="SPAP7G5.04c"/>
</dbReference>
<dbReference type="GeneID" id="2542079"/>
<dbReference type="KEGG" id="spo:2542079"/>
<dbReference type="PomBase" id="SPAP7G5.04c">
    <property type="gene designation" value="lys1"/>
</dbReference>
<dbReference type="VEuPathDB" id="FungiDB:SPAP7G5.04c"/>
<dbReference type="eggNOG" id="KOG1178">
    <property type="taxonomic scope" value="Eukaryota"/>
</dbReference>
<dbReference type="HOGENOM" id="CLU_000022_19_0_1"/>
<dbReference type="InParanoid" id="P40976"/>
<dbReference type="OMA" id="ENDKFTM"/>
<dbReference type="PhylomeDB" id="P40976"/>
<dbReference type="BRENDA" id="1.2.1.95">
    <property type="organism ID" value="5613"/>
</dbReference>
<dbReference type="UniPathway" id="UPA00033">
    <property type="reaction ID" value="UER00032"/>
</dbReference>
<dbReference type="PRO" id="PR:P40976"/>
<dbReference type="Proteomes" id="UP000002485">
    <property type="component" value="Chromosome I"/>
</dbReference>
<dbReference type="GO" id="GO:0005829">
    <property type="term" value="C:cytosol"/>
    <property type="evidence" value="ECO:0007005"/>
    <property type="project" value="PomBase"/>
</dbReference>
<dbReference type="GO" id="GO:0004043">
    <property type="term" value="F:L-aminoadipate-semialdehyde dehydrogenase activity"/>
    <property type="evidence" value="ECO:0000314"/>
    <property type="project" value="PomBase"/>
</dbReference>
<dbReference type="GO" id="GO:0031177">
    <property type="term" value="F:phosphopantetheine binding"/>
    <property type="evidence" value="ECO:0007669"/>
    <property type="project" value="InterPro"/>
</dbReference>
<dbReference type="GO" id="GO:0009085">
    <property type="term" value="P:lysine biosynthetic process"/>
    <property type="evidence" value="ECO:0000314"/>
    <property type="project" value="PomBase"/>
</dbReference>
<dbReference type="GO" id="GO:0019878">
    <property type="term" value="P:lysine biosynthetic process via aminoadipic acid"/>
    <property type="evidence" value="ECO:0000315"/>
    <property type="project" value="PomBase"/>
</dbReference>
<dbReference type="CDD" id="cd05235">
    <property type="entry name" value="SDR_e1"/>
    <property type="match status" value="1"/>
</dbReference>
<dbReference type="FunFam" id="3.30.559.30:FF:000068">
    <property type="entry name" value="L-2-aminoadipate reductase"/>
    <property type="match status" value="1"/>
</dbReference>
<dbReference type="FunFam" id="3.40.50.720:FF:000787">
    <property type="entry name" value="L-2-aminoadipate reductase"/>
    <property type="match status" value="1"/>
</dbReference>
<dbReference type="Gene3D" id="3.30.300.30">
    <property type="match status" value="1"/>
</dbReference>
<dbReference type="Gene3D" id="1.10.1200.10">
    <property type="entry name" value="ACP-like"/>
    <property type="match status" value="1"/>
</dbReference>
<dbReference type="Gene3D" id="3.40.50.12780">
    <property type="entry name" value="N-terminal domain of ligase-like"/>
    <property type="match status" value="1"/>
</dbReference>
<dbReference type="Gene3D" id="3.40.50.720">
    <property type="entry name" value="NAD(P)-binding Rossmann-like Domain"/>
    <property type="match status" value="1"/>
</dbReference>
<dbReference type="Gene3D" id="3.30.559.30">
    <property type="entry name" value="Nonribosomal peptide synthetase, condensation domain"/>
    <property type="match status" value="1"/>
</dbReference>
<dbReference type="InterPro" id="IPR010071">
    <property type="entry name" value="AA_adenyl_dom"/>
</dbReference>
<dbReference type="InterPro" id="IPR036736">
    <property type="entry name" value="ACP-like_sf"/>
</dbReference>
<dbReference type="InterPro" id="IPR045851">
    <property type="entry name" value="AMP-bd_C_sf"/>
</dbReference>
<dbReference type="InterPro" id="IPR020845">
    <property type="entry name" value="AMP-binding_CS"/>
</dbReference>
<dbReference type="InterPro" id="IPR000873">
    <property type="entry name" value="AMP-dep_synth/lig_dom"/>
</dbReference>
<dbReference type="InterPro" id="IPR042099">
    <property type="entry name" value="ANL_N_sf"/>
</dbReference>
<dbReference type="InterPro" id="IPR001242">
    <property type="entry name" value="Condensatn"/>
</dbReference>
<dbReference type="InterPro" id="IPR013120">
    <property type="entry name" value="Far_NAD-bd"/>
</dbReference>
<dbReference type="InterPro" id="IPR014397">
    <property type="entry name" value="Lys2"/>
</dbReference>
<dbReference type="InterPro" id="IPR036291">
    <property type="entry name" value="NAD(P)-bd_dom_sf"/>
</dbReference>
<dbReference type="InterPro" id="IPR020806">
    <property type="entry name" value="PKS_PP-bd"/>
</dbReference>
<dbReference type="InterPro" id="IPR009081">
    <property type="entry name" value="PP-bd_ACP"/>
</dbReference>
<dbReference type="InterPro" id="IPR006162">
    <property type="entry name" value="Ppantetheine_attach_site"/>
</dbReference>
<dbReference type="InterPro" id="IPR010080">
    <property type="entry name" value="Thioester_reductase-like_dom"/>
</dbReference>
<dbReference type="NCBIfam" id="TIGR01733">
    <property type="entry name" value="AA-adenyl-dom"/>
    <property type="match status" value="1"/>
</dbReference>
<dbReference type="NCBIfam" id="TIGR03443">
    <property type="entry name" value="alpha_am_amid"/>
    <property type="match status" value="1"/>
</dbReference>
<dbReference type="NCBIfam" id="TIGR01746">
    <property type="entry name" value="Thioester-redct"/>
    <property type="match status" value="1"/>
</dbReference>
<dbReference type="PANTHER" id="PTHR44845">
    <property type="entry name" value="CARRIER DOMAIN-CONTAINING PROTEIN"/>
    <property type="match status" value="1"/>
</dbReference>
<dbReference type="PANTHER" id="PTHR44845:SF1">
    <property type="entry name" value="L-2-AMINOADIPATE REDUCTASE"/>
    <property type="match status" value="1"/>
</dbReference>
<dbReference type="Pfam" id="PF00501">
    <property type="entry name" value="AMP-binding"/>
    <property type="match status" value="1"/>
</dbReference>
<dbReference type="Pfam" id="PF00668">
    <property type="entry name" value="Condensation"/>
    <property type="match status" value="1"/>
</dbReference>
<dbReference type="Pfam" id="PF07993">
    <property type="entry name" value="NAD_binding_4"/>
    <property type="match status" value="1"/>
</dbReference>
<dbReference type="Pfam" id="PF00550">
    <property type="entry name" value="PP-binding"/>
    <property type="match status" value="1"/>
</dbReference>
<dbReference type="PIRSF" id="PIRSF001617">
    <property type="entry name" value="Alpha-AR"/>
    <property type="match status" value="1"/>
</dbReference>
<dbReference type="SMART" id="SM00823">
    <property type="entry name" value="PKS_PP"/>
    <property type="match status" value="1"/>
</dbReference>
<dbReference type="SUPFAM" id="SSF56801">
    <property type="entry name" value="Acetyl-CoA synthetase-like"/>
    <property type="match status" value="1"/>
</dbReference>
<dbReference type="SUPFAM" id="SSF47336">
    <property type="entry name" value="ACP-like"/>
    <property type="match status" value="1"/>
</dbReference>
<dbReference type="SUPFAM" id="SSF52777">
    <property type="entry name" value="CoA-dependent acyltransferases"/>
    <property type="match status" value="1"/>
</dbReference>
<dbReference type="SUPFAM" id="SSF51735">
    <property type="entry name" value="NAD(P)-binding Rossmann-fold domains"/>
    <property type="match status" value="1"/>
</dbReference>
<dbReference type="PROSITE" id="PS00455">
    <property type="entry name" value="AMP_BINDING"/>
    <property type="match status" value="1"/>
</dbReference>
<dbReference type="PROSITE" id="PS50075">
    <property type="entry name" value="CARRIER"/>
    <property type="match status" value="1"/>
</dbReference>
<dbReference type="PROSITE" id="PS00012">
    <property type="entry name" value="PHOSPHOPANTETHEINE"/>
    <property type="match status" value="1"/>
</dbReference>
<name>LYS2_SCHPO</name>
<gene>
    <name type="primary">lys1</name>
    <name type="ORF">SPAP7G5.04c</name>
</gene>